<gene>
    <name type="primary">Dram2</name>
    <name type="synonym">Tmem77</name>
</gene>
<sequence length="267" mass="30173">MWWFQQGLSFLPSALVIWTFATFIFSYITAITLHHVDPALPYISDTGTMPPERCLFGVMLNIAAVLGIATIYVRYKQVHALNPEENLIIKLNKAGLVLGILSCLGLSLVANFQKSALFIVHVCGAVLAFSMGSFYMFVQTILSYQMQPKIHSKQVFWVRLLLVIWCGVSALSMMTCSSILYSSDFGADIVQKLHWNPEDKGYVLHIVTTAAEWSMSFSFFGFFLTYIRDFQKITLRVEANLHGLTLYDTVPCPVTNERTPLLSRDFQ</sequence>
<accession>Q5BK09</accession>
<name>DRAM2_RAT</name>
<organism>
    <name type="scientific">Rattus norvegicus</name>
    <name type="common">Rat</name>
    <dbReference type="NCBI Taxonomy" id="10116"/>
    <lineage>
        <taxon>Eukaryota</taxon>
        <taxon>Metazoa</taxon>
        <taxon>Chordata</taxon>
        <taxon>Craniata</taxon>
        <taxon>Vertebrata</taxon>
        <taxon>Euteleostomi</taxon>
        <taxon>Mammalia</taxon>
        <taxon>Eutheria</taxon>
        <taxon>Euarchontoglires</taxon>
        <taxon>Glires</taxon>
        <taxon>Rodentia</taxon>
        <taxon>Myomorpha</taxon>
        <taxon>Muroidea</taxon>
        <taxon>Muridae</taxon>
        <taxon>Murinae</taxon>
        <taxon>Rattus</taxon>
    </lineage>
</organism>
<evidence type="ECO:0000250" key="1">
    <source>
        <dbReference type="UniProtKB" id="Q6UX65"/>
    </source>
</evidence>
<evidence type="ECO:0000250" key="2">
    <source>
        <dbReference type="UniProtKB" id="Q9CR48"/>
    </source>
</evidence>
<evidence type="ECO:0000255" key="3"/>
<evidence type="ECO:0000305" key="4"/>
<reference key="1">
    <citation type="journal article" date="2004" name="Genome Res.">
        <title>The status, quality, and expansion of the NIH full-length cDNA project: the Mammalian Gene Collection (MGC).</title>
        <authorList>
            <consortium name="The MGC Project Team"/>
        </authorList>
    </citation>
    <scope>NUCLEOTIDE SEQUENCE [LARGE SCALE MRNA]</scope>
    <source>
        <tissue>Liver</tissue>
    </source>
</reference>
<dbReference type="EMBL" id="BC091251">
    <property type="protein sequence ID" value="AAH91251.1"/>
    <property type="molecule type" value="mRNA"/>
</dbReference>
<dbReference type="RefSeq" id="NP_001020189.1">
    <property type="nucleotide sequence ID" value="NM_001025018.1"/>
</dbReference>
<dbReference type="RefSeq" id="XP_006233182.1">
    <property type="nucleotide sequence ID" value="XM_006233120.3"/>
</dbReference>
<dbReference type="RefSeq" id="XP_006233183.1">
    <property type="nucleotide sequence ID" value="XM_006233121.2"/>
</dbReference>
<dbReference type="RefSeq" id="XP_006233184.1">
    <property type="nucleotide sequence ID" value="XM_006233122.3"/>
</dbReference>
<dbReference type="FunCoup" id="Q5BK09">
    <property type="interactions" value="2110"/>
</dbReference>
<dbReference type="STRING" id="10116.ENSRNOP00000023903"/>
<dbReference type="PhosphoSitePlus" id="Q5BK09"/>
<dbReference type="PaxDb" id="10116-ENSRNOP00000023903"/>
<dbReference type="Ensembl" id="ENSRNOT00000023903.8">
    <property type="protein sequence ID" value="ENSRNOP00000023903.5"/>
    <property type="gene ID" value="ENSRNOG00000017744.8"/>
</dbReference>
<dbReference type="GeneID" id="362011"/>
<dbReference type="KEGG" id="rno:362011"/>
<dbReference type="UCSC" id="RGD:1564099">
    <property type="organism name" value="rat"/>
</dbReference>
<dbReference type="AGR" id="RGD:1564099"/>
<dbReference type="CTD" id="128338"/>
<dbReference type="RGD" id="1564099">
    <property type="gene designation" value="Dram2"/>
</dbReference>
<dbReference type="eggNOG" id="KOG4320">
    <property type="taxonomic scope" value="Eukaryota"/>
</dbReference>
<dbReference type="GeneTree" id="ENSGT01030000234578"/>
<dbReference type="HOGENOM" id="CLU_059992_2_2_1"/>
<dbReference type="InParanoid" id="Q5BK09"/>
<dbReference type="OMA" id="FWIRCAL"/>
<dbReference type="OrthoDB" id="191706at2759"/>
<dbReference type="PhylomeDB" id="Q5BK09"/>
<dbReference type="TreeFam" id="TF314508"/>
<dbReference type="PRO" id="PR:Q5BK09"/>
<dbReference type="Proteomes" id="UP000002494">
    <property type="component" value="Chromosome 2"/>
</dbReference>
<dbReference type="Bgee" id="ENSRNOG00000017744">
    <property type="expression patterns" value="Expressed in liver and 19 other cell types or tissues"/>
</dbReference>
<dbReference type="GO" id="GO:0016324">
    <property type="term" value="C:apical plasma membrane"/>
    <property type="evidence" value="ECO:0000250"/>
    <property type="project" value="UniProtKB"/>
</dbReference>
<dbReference type="GO" id="GO:0005737">
    <property type="term" value="C:cytoplasm"/>
    <property type="evidence" value="ECO:0000266"/>
    <property type="project" value="RGD"/>
</dbReference>
<dbReference type="GO" id="GO:0005794">
    <property type="term" value="C:Golgi apparatus"/>
    <property type="evidence" value="ECO:0007669"/>
    <property type="project" value="Ensembl"/>
</dbReference>
<dbReference type="GO" id="GO:0005765">
    <property type="term" value="C:lysosomal membrane"/>
    <property type="evidence" value="ECO:0007669"/>
    <property type="project" value="UniProtKB-SubCell"/>
</dbReference>
<dbReference type="GO" id="GO:0005764">
    <property type="term" value="C:lysosome"/>
    <property type="evidence" value="ECO:0000250"/>
    <property type="project" value="UniProtKB"/>
</dbReference>
<dbReference type="GO" id="GO:0001917">
    <property type="term" value="C:photoreceptor inner segment"/>
    <property type="evidence" value="ECO:0000250"/>
    <property type="project" value="UniProtKB"/>
</dbReference>
<dbReference type="GO" id="GO:0006915">
    <property type="term" value="P:apoptotic process"/>
    <property type="evidence" value="ECO:0007669"/>
    <property type="project" value="UniProtKB-KW"/>
</dbReference>
<dbReference type="GO" id="GO:0006914">
    <property type="term" value="P:autophagy"/>
    <property type="evidence" value="ECO:0007669"/>
    <property type="project" value="UniProtKB-KW"/>
</dbReference>
<dbReference type="GO" id="GO:0008283">
    <property type="term" value="P:cell population proliferation"/>
    <property type="evidence" value="ECO:0000266"/>
    <property type="project" value="RGD"/>
</dbReference>
<dbReference type="GO" id="GO:0045494">
    <property type="term" value="P:photoreceptor cell maintenance"/>
    <property type="evidence" value="ECO:0000250"/>
    <property type="project" value="UniProtKB"/>
</dbReference>
<dbReference type="GO" id="GO:0010506">
    <property type="term" value="P:regulation of autophagy"/>
    <property type="evidence" value="ECO:0000266"/>
    <property type="project" value="RGD"/>
</dbReference>
<dbReference type="GO" id="GO:0060041">
    <property type="term" value="P:retina development in camera-type eye"/>
    <property type="evidence" value="ECO:0000266"/>
    <property type="project" value="RGD"/>
</dbReference>
<dbReference type="GO" id="GO:0007601">
    <property type="term" value="P:visual perception"/>
    <property type="evidence" value="ECO:0000250"/>
    <property type="project" value="UniProtKB"/>
</dbReference>
<dbReference type="InterPro" id="IPR050911">
    <property type="entry name" value="DRAM/TMEM150_Autophagy_Mod"/>
</dbReference>
<dbReference type="InterPro" id="IPR019402">
    <property type="entry name" value="Frag1/DRAM/Sfk1"/>
</dbReference>
<dbReference type="PANTHER" id="PTHR21324:SF10">
    <property type="entry name" value="DNA DAMAGE-REGULATED AUTOPHAGY MODULATOR PROTEIN 2"/>
    <property type="match status" value="1"/>
</dbReference>
<dbReference type="PANTHER" id="PTHR21324">
    <property type="entry name" value="FASTING-INDUCIBLE INTEGRAL MEMBRANE PROTEIN TM6P1-RELATED"/>
    <property type="match status" value="1"/>
</dbReference>
<dbReference type="Pfam" id="PF10277">
    <property type="entry name" value="Frag1"/>
    <property type="match status" value="1"/>
</dbReference>
<protein>
    <recommendedName>
        <fullName>DNA damage-regulated autophagy modulator protein 2</fullName>
    </recommendedName>
    <alternativeName>
        <fullName>Transmembrane protein 77</fullName>
    </alternativeName>
</protein>
<comment type="function">
    <text evidence="1">Plays a role in the initiation of autophagy. In the retina, might be involved in the process of photoreceptor cells renewal and recycling to preserve visual function. Induces apoptotic cell death when coexpressed with DRAM1.</text>
</comment>
<comment type="subcellular location">
    <subcellularLocation>
        <location evidence="1">Lysosome membrane</location>
        <topology evidence="1">Multi-pass membrane protein</topology>
    </subcellularLocation>
    <subcellularLocation>
        <location evidence="2">Photoreceptor inner segment</location>
    </subcellularLocation>
    <subcellularLocation>
        <location evidence="2">Apical cell membrane</location>
    </subcellularLocation>
    <text evidence="2">Localized to photoreceptor inner segments and to the apical surface of retinal pigment epithelial cells.</text>
</comment>
<comment type="similarity">
    <text evidence="4">Belongs to the DRAM/TMEM150 family.</text>
</comment>
<keyword id="KW-0053">Apoptosis</keyword>
<keyword id="KW-0072">Autophagy</keyword>
<keyword id="KW-1003">Cell membrane</keyword>
<keyword id="KW-0458">Lysosome</keyword>
<keyword id="KW-0472">Membrane</keyword>
<keyword id="KW-1185">Reference proteome</keyword>
<keyword id="KW-0812">Transmembrane</keyword>
<keyword id="KW-1133">Transmembrane helix</keyword>
<feature type="chain" id="PRO_0000254104" description="DNA damage-regulated autophagy modulator protein 2">
    <location>
        <begin position="1"/>
        <end position="267"/>
    </location>
</feature>
<feature type="transmembrane region" description="Helical" evidence="3">
    <location>
        <begin position="8"/>
        <end position="28"/>
    </location>
</feature>
<feature type="transmembrane region" description="Helical" evidence="3">
    <location>
        <begin position="53"/>
        <end position="73"/>
    </location>
</feature>
<feature type="transmembrane region" description="Helical" evidence="3">
    <location>
        <begin position="87"/>
        <end position="107"/>
    </location>
</feature>
<feature type="transmembrane region" description="Helical" evidence="3">
    <location>
        <begin position="118"/>
        <end position="138"/>
    </location>
</feature>
<feature type="transmembrane region" description="Helical" evidence="3">
    <location>
        <begin position="160"/>
        <end position="180"/>
    </location>
</feature>
<feature type="transmembrane region" description="Helical" evidence="3">
    <location>
        <begin position="203"/>
        <end position="223"/>
    </location>
</feature>
<proteinExistence type="evidence at transcript level"/>